<reference key="1">
    <citation type="submission" date="2008-02" db="EMBL/GenBank/DDBJ databases">
        <title>Complete sequence of Yersinia pseudotuberculosis YPIII.</title>
        <authorList>
            <consortium name="US DOE Joint Genome Institute"/>
            <person name="Copeland A."/>
            <person name="Lucas S."/>
            <person name="Lapidus A."/>
            <person name="Glavina del Rio T."/>
            <person name="Dalin E."/>
            <person name="Tice H."/>
            <person name="Bruce D."/>
            <person name="Goodwin L."/>
            <person name="Pitluck S."/>
            <person name="Munk A.C."/>
            <person name="Brettin T."/>
            <person name="Detter J.C."/>
            <person name="Han C."/>
            <person name="Tapia R."/>
            <person name="Schmutz J."/>
            <person name="Larimer F."/>
            <person name="Land M."/>
            <person name="Hauser L."/>
            <person name="Challacombe J.F."/>
            <person name="Green L."/>
            <person name="Lindler L.E."/>
            <person name="Nikolich M.P."/>
            <person name="Richardson P."/>
        </authorList>
    </citation>
    <scope>NUCLEOTIDE SEQUENCE [LARGE SCALE GENOMIC DNA]</scope>
    <source>
        <strain>YPIII</strain>
    </source>
</reference>
<keyword id="KW-0687">Ribonucleoprotein</keyword>
<keyword id="KW-0689">Ribosomal protein</keyword>
<keyword id="KW-0694">RNA-binding</keyword>
<keyword id="KW-0699">rRNA-binding</keyword>
<proteinExistence type="inferred from homology"/>
<gene>
    <name evidence="1" type="primary">rplJ</name>
    <name type="ordered locus">YPK_0337</name>
</gene>
<dbReference type="EMBL" id="CP000950">
    <property type="protein sequence ID" value="ACA66647.1"/>
    <property type="molecule type" value="Genomic_DNA"/>
</dbReference>
<dbReference type="RefSeq" id="WP_002210674.1">
    <property type="nucleotide sequence ID" value="NZ_CP009792.1"/>
</dbReference>
<dbReference type="GeneID" id="96663774"/>
<dbReference type="KEGG" id="ypy:YPK_0337"/>
<dbReference type="PATRIC" id="fig|502800.11.peg.940"/>
<dbReference type="GO" id="GO:0015934">
    <property type="term" value="C:large ribosomal subunit"/>
    <property type="evidence" value="ECO:0007669"/>
    <property type="project" value="InterPro"/>
</dbReference>
<dbReference type="GO" id="GO:0070180">
    <property type="term" value="F:large ribosomal subunit rRNA binding"/>
    <property type="evidence" value="ECO:0007669"/>
    <property type="project" value="UniProtKB-UniRule"/>
</dbReference>
<dbReference type="GO" id="GO:0003735">
    <property type="term" value="F:structural constituent of ribosome"/>
    <property type="evidence" value="ECO:0007669"/>
    <property type="project" value="InterPro"/>
</dbReference>
<dbReference type="GO" id="GO:0006412">
    <property type="term" value="P:translation"/>
    <property type="evidence" value="ECO:0007669"/>
    <property type="project" value="UniProtKB-UniRule"/>
</dbReference>
<dbReference type="CDD" id="cd05797">
    <property type="entry name" value="Ribosomal_L10"/>
    <property type="match status" value="1"/>
</dbReference>
<dbReference type="FunFam" id="3.30.70.1730:FF:000001">
    <property type="entry name" value="50S ribosomal protein L10"/>
    <property type="match status" value="1"/>
</dbReference>
<dbReference type="Gene3D" id="3.30.70.1730">
    <property type="match status" value="1"/>
</dbReference>
<dbReference type="Gene3D" id="6.10.250.2350">
    <property type="match status" value="1"/>
</dbReference>
<dbReference type="HAMAP" id="MF_00362">
    <property type="entry name" value="Ribosomal_uL10"/>
    <property type="match status" value="1"/>
</dbReference>
<dbReference type="InterPro" id="IPR001790">
    <property type="entry name" value="Ribosomal_uL10"/>
</dbReference>
<dbReference type="InterPro" id="IPR043141">
    <property type="entry name" value="Ribosomal_uL10-like_sf"/>
</dbReference>
<dbReference type="InterPro" id="IPR022973">
    <property type="entry name" value="Ribosomal_uL10_bac"/>
</dbReference>
<dbReference type="InterPro" id="IPR047865">
    <property type="entry name" value="Ribosomal_uL10_bac_type"/>
</dbReference>
<dbReference type="InterPro" id="IPR002363">
    <property type="entry name" value="Ribosomal_uL10_CS_bac"/>
</dbReference>
<dbReference type="NCBIfam" id="NF000955">
    <property type="entry name" value="PRK00099.1-1"/>
    <property type="match status" value="1"/>
</dbReference>
<dbReference type="PANTHER" id="PTHR11560">
    <property type="entry name" value="39S RIBOSOMAL PROTEIN L10, MITOCHONDRIAL"/>
    <property type="match status" value="1"/>
</dbReference>
<dbReference type="Pfam" id="PF00466">
    <property type="entry name" value="Ribosomal_L10"/>
    <property type="match status" value="1"/>
</dbReference>
<dbReference type="SUPFAM" id="SSF160369">
    <property type="entry name" value="Ribosomal protein L10-like"/>
    <property type="match status" value="1"/>
</dbReference>
<dbReference type="PROSITE" id="PS01109">
    <property type="entry name" value="RIBOSOMAL_L10"/>
    <property type="match status" value="1"/>
</dbReference>
<accession>B1JJJ6</accession>
<sequence length="165" mass="17676">MALNLQGKQAIVAEVKEVAKGALSAVVADSRGVTVDKMTELRRAGREAGVHMQVVRNTLLRRIVEGTPFECLKDTFVGPTLIAFSAEHPGAAARLFKAFAKDNAKFEVKAAAFEGELIPAAQIDRLATLPTYEEAIARLMGTMKEAAAGKLVRTLAALRDQKEAA</sequence>
<name>RL10_YERPY</name>
<comment type="function">
    <text evidence="1">Forms part of the ribosomal stalk, playing a central role in the interaction of the ribosome with GTP-bound translation factors.</text>
</comment>
<comment type="subunit">
    <text evidence="1">Part of the ribosomal stalk of the 50S ribosomal subunit. The N-terminus interacts with L11 and the large rRNA to form the base of the stalk. The C-terminus forms an elongated spine to which L12 dimers bind in a sequential fashion forming a multimeric L10(L12)X complex.</text>
</comment>
<comment type="similarity">
    <text evidence="1">Belongs to the universal ribosomal protein uL10 family.</text>
</comment>
<protein>
    <recommendedName>
        <fullName evidence="1">Large ribosomal subunit protein uL10</fullName>
    </recommendedName>
    <alternativeName>
        <fullName evidence="2">50S ribosomal protein L10</fullName>
    </alternativeName>
</protein>
<feature type="chain" id="PRO_1000121039" description="Large ribosomal subunit protein uL10">
    <location>
        <begin position="1"/>
        <end position="165"/>
    </location>
</feature>
<evidence type="ECO:0000255" key="1">
    <source>
        <dbReference type="HAMAP-Rule" id="MF_00362"/>
    </source>
</evidence>
<evidence type="ECO:0000305" key="2"/>
<organism>
    <name type="scientific">Yersinia pseudotuberculosis serotype O:3 (strain YPIII)</name>
    <dbReference type="NCBI Taxonomy" id="502800"/>
    <lineage>
        <taxon>Bacteria</taxon>
        <taxon>Pseudomonadati</taxon>
        <taxon>Pseudomonadota</taxon>
        <taxon>Gammaproteobacteria</taxon>
        <taxon>Enterobacterales</taxon>
        <taxon>Yersiniaceae</taxon>
        <taxon>Yersinia</taxon>
    </lineage>
</organism>